<accession>B5E6L7</accession>
<dbReference type="EC" id="5.3.1.1" evidence="1"/>
<dbReference type="EMBL" id="CP001015">
    <property type="protein sequence ID" value="ACF56186.1"/>
    <property type="molecule type" value="Genomic_DNA"/>
</dbReference>
<dbReference type="SMR" id="B5E6L7"/>
<dbReference type="KEGG" id="spx:SPG_1500"/>
<dbReference type="HOGENOM" id="CLU_024251_2_3_9"/>
<dbReference type="UniPathway" id="UPA00109">
    <property type="reaction ID" value="UER00189"/>
</dbReference>
<dbReference type="UniPathway" id="UPA00138"/>
<dbReference type="GO" id="GO:0005829">
    <property type="term" value="C:cytosol"/>
    <property type="evidence" value="ECO:0007669"/>
    <property type="project" value="TreeGrafter"/>
</dbReference>
<dbReference type="GO" id="GO:0004807">
    <property type="term" value="F:triose-phosphate isomerase activity"/>
    <property type="evidence" value="ECO:0007669"/>
    <property type="project" value="UniProtKB-UniRule"/>
</dbReference>
<dbReference type="GO" id="GO:0006094">
    <property type="term" value="P:gluconeogenesis"/>
    <property type="evidence" value="ECO:0007669"/>
    <property type="project" value="UniProtKB-UniRule"/>
</dbReference>
<dbReference type="GO" id="GO:0046166">
    <property type="term" value="P:glyceraldehyde-3-phosphate biosynthetic process"/>
    <property type="evidence" value="ECO:0007669"/>
    <property type="project" value="TreeGrafter"/>
</dbReference>
<dbReference type="GO" id="GO:0019563">
    <property type="term" value="P:glycerol catabolic process"/>
    <property type="evidence" value="ECO:0007669"/>
    <property type="project" value="TreeGrafter"/>
</dbReference>
<dbReference type="GO" id="GO:0006096">
    <property type="term" value="P:glycolytic process"/>
    <property type="evidence" value="ECO:0007669"/>
    <property type="project" value="UniProtKB-UniRule"/>
</dbReference>
<dbReference type="CDD" id="cd00311">
    <property type="entry name" value="TIM"/>
    <property type="match status" value="1"/>
</dbReference>
<dbReference type="FunFam" id="3.20.20.70:FF:000016">
    <property type="entry name" value="Triosephosphate isomerase"/>
    <property type="match status" value="1"/>
</dbReference>
<dbReference type="Gene3D" id="3.20.20.70">
    <property type="entry name" value="Aldolase class I"/>
    <property type="match status" value="1"/>
</dbReference>
<dbReference type="HAMAP" id="MF_00147_B">
    <property type="entry name" value="TIM_B"/>
    <property type="match status" value="1"/>
</dbReference>
<dbReference type="InterPro" id="IPR013785">
    <property type="entry name" value="Aldolase_TIM"/>
</dbReference>
<dbReference type="InterPro" id="IPR035990">
    <property type="entry name" value="TIM_sf"/>
</dbReference>
<dbReference type="InterPro" id="IPR022896">
    <property type="entry name" value="TrioseP_Isoase_bac/euk"/>
</dbReference>
<dbReference type="InterPro" id="IPR000652">
    <property type="entry name" value="Triosephosphate_isomerase"/>
</dbReference>
<dbReference type="InterPro" id="IPR020861">
    <property type="entry name" value="Triosephosphate_isomerase_AS"/>
</dbReference>
<dbReference type="NCBIfam" id="TIGR00419">
    <property type="entry name" value="tim"/>
    <property type="match status" value="1"/>
</dbReference>
<dbReference type="PANTHER" id="PTHR21139">
    <property type="entry name" value="TRIOSEPHOSPHATE ISOMERASE"/>
    <property type="match status" value="1"/>
</dbReference>
<dbReference type="PANTHER" id="PTHR21139:SF42">
    <property type="entry name" value="TRIOSEPHOSPHATE ISOMERASE"/>
    <property type="match status" value="1"/>
</dbReference>
<dbReference type="Pfam" id="PF00121">
    <property type="entry name" value="TIM"/>
    <property type="match status" value="1"/>
</dbReference>
<dbReference type="SUPFAM" id="SSF51351">
    <property type="entry name" value="Triosephosphate isomerase (TIM)"/>
    <property type="match status" value="1"/>
</dbReference>
<dbReference type="PROSITE" id="PS00171">
    <property type="entry name" value="TIM_1"/>
    <property type="match status" value="1"/>
</dbReference>
<dbReference type="PROSITE" id="PS51440">
    <property type="entry name" value="TIM_2"/>
    <property type="match status" value="1"/>
</dbReference>
<name>TPIS_STRP4</name>
<reference key="1">
    <citation type="journal article" date="2001" name="Microb. Drug Resist.">
        <title>Annotated draft genomic sequence from a Streptococcus pneumoniae type 19F clinical isolate.</title>
        <authorList>
            <person name="Dopazo J."/>
            <person name="Mendoza A."/>
            <person name="Herrero J."/>
            <person name="Caldara F."/>
            <person name="Humbert Y."/>
            <person name="Friedli L."/>
            <person name="Guerrier M."/>
            <person name="Grand-Schenk E."/>
            <person name="Gandin C."/>
            <person name="de Francesco M."/>
            <person name="Polissi A."/>
            <person name="Buell G."/>
            <person name="Feger G."/>
            <person name="Garcia E."/>
            <person name="Peitsch M."/>
            <person name="Garcia-Bustos J.F."/>
        </authorList>
    </citation>
    <scope>NUCLEOTIDE SEQUENCE [LARGE SCALE GENOMIC DNA]</scope>
    <source>
        <strain>G54</strain>
    </source>
</reference>
<reference key="2">
    <citation type="submission" date="2008-03" db="EMBL/GenBank/DDBJ databases">
        <title>Pneumococcal beta glucoside metabolism investigated by whole genome comparison.</title>
        <authorList>
            <person name="Mulas L."/>
            <person name="Trappetti C."/>
            <person name="Hakenbeck R."/>
            <person name="Iannelli F."/>
            <person name="Pozzi G."/>
            <person name="Davidsen T.M."/>
            <person name="Tettelin H."/>
            <person name="Oggioni M."/>
        </authorList>
    </citation>
    <scope>NUCLEOTIDE SEQUENCE [LARGE SCALE GENOMIC DNA]</scope>
    <source>
        <strain>G54</strain>
    </source>
</reference>
<comment type="function">
    <text evidence="1">Involved in the gluconeogenesis. Catalyzes stereospecifically the conversion of dihydroxyacetone phosphate (DHAP) to D-glyceraldehyde-3-phosphate (G3P).</text>
</comment>
<comment type="catalytic activity">
    <reaction evidence="1">
        <text>D-glyceraldehyde 3-phosphate = dihydroxyacetone phosphate</text>
        <dbReference type="Rhea" id="RHEA:18585"/>
        <dbReference type="ChEBI" id="CHEBI:57642"/>
        <dbReference type="ChEBI" id="CHEBI:59776"/>
        <dbReference type="EC" id="5.3.1.1"/>
    </reaction>
</comment>
<comment type="pathway">
    <text evidence="1">Carbohydrate biosynthesis; gluconeogenesis.</text>
</comment>
<comment type="pathway">
    <text evidence="1">Carbohydrate degradation; glycolysis; D-glyceraldehyde 3-phosphate from glycerone phosphate: step 1/1.</text>
</comment>
<comment type="subunit">
    <text evidence="1">Homodimer.</text>
</comment>
<comment type="subcellular location">
    <subcellularLocation>
        <location evidence="1">Cytoplasm</location>
    </subcellularLocation>
</comment>
<comment type="similarity">
    <text evidence="1">Belongs to the triosephosphate isomerase family.</text>
</comment>
<sequence>MSRKPFIAGNWKMNKNPEEAKAFVEAVASKLPSSDLVEAGIAAPALDLTTVLAVAKGSNLKVAAQNCYFENAGAFTGETSPQVLKEIGTDYVVIGHSERRDYFHETDEDINKKAKAIFANGMLPIICCGESLETYEAGKAAEFVGAQVSAALAGLTAEQVAASVIAYEPIWAIGTGKSASQDDAQKMCKVVRDVVAADFGQEVADKVRVQYGGSVKPENVASYMACPDVDGALVGGASLEAESFLALLDFVK</sequence>
<organism>
    <name type="scientific">Streptococcus pneumoniae serotype 19F (strain G54)</name>
    <dbReference type="NCBI Taxonomy" id="512566"/>
    <lineage>
        <taxon>Bacteria</taxon>
        <taxon>Bacillati</taxon>
        <taxon>Bacillota</taxon>
        <taxon>Bacilli</taxon>
        <taxon>Lactobacillales</taxon>
        <taxon>Streptococcaceae</taxon>
        <taxon>Streptococcus</taxon>
    </lineage>
</organism>
<proteinExistence type="inferred from homology"/>
<keyword id="KW-0963">Cytoplasm</keyword>
<keyword id="KW-0312">Gluconeogenesis</keyword>
<keyword id="KW-0324">Glycolysis</keyword>
<keyword id="KW-0413">Isomerase</keyword>
<evidence type="ECO:0000255" key="1">
    <source>
        <dbReference type="HAMAP-Rule" id="MF_00147"/>
    </source>
</evidence>
<protein>
    <recommendedName>
        <fullName evidence="1">Triosephosphate isomerase</fullName>
        <shortName evidence="1">TIM</shortName>
        <shortName evidence="1">TPI</shortName>
        <ecNumber evidence="1">5.3.1.1</ecNumber>
    </recommendedName>
    <alternativeName>
        <fullName evidence="1">Triose-phosphate isomerase</fullName>
    </alternativeName>
</protein>
<feature type="chain" id="PRO_1000096538" description="Triosephosphate isomerase">
    <location>
        <begin position="1"/>
        <end position="252"/>
    </location>
</feature>
<feature type="active site" description="Electrophile" evidence="1">
    <location>
        <position position="96"/>
    </location>
</feature>
<feature type="active site" description="Proton acceptor" evidence="1">
    <location>
        <position position="168"/>
    </location>
</feature>
<feature type="binding site" evidence="1">
    <location>
        <begin position="10"/>
        <end position="12"/>
    </location>
    <ligand>
        <name>substrate</name>
    </ligand>
</feature>
<feature type="binding site" evidence="1">
    <location>
        <position position="174"/>
    </location>
    <ligand>
        <name>substrate</name>
    </ligand>
</feature>
<feature type="binding site" evidence="1">
    <location>
        <position position="214"/>
    </location>
    <ligand>
        <name>substrate</name>
    </ligand>
</feature>
<feature type="binding site" evidence="1">
    <location>
        <begin position="235"/>
        <end position="236"/>
    </location>
    <ligand>
        <name>substrate</name>
    </ligand>
</feature>
<gene>
    <name evidence="1" type="primary">tpiA</name>
    <name type="ordered locus">SPG_1500</name>
</gene>